<feature type="chain" id="PRO_0000419131" description="Particulate methane monooxygenase beta subunit">
    <location>
        <begin position="1"/>
        <end position="247"/>
    </location>
</feature>
<feature type="transmembrane region" description="Helical" evidence="1">
    <location>
        <begin position="23"/>
        <end position="43"/>
    </location>
</feature>
<feature type="transmembrane region" description="Helical" evidence="1">
    <location>
        <begin position="59"/>
        <end position="79"/>
    </location>
</feature>
<feature type="transmembrane region" description="Helical" evidence="1">
    <location>
        <begin position="86"/>
        <end position="106"/>
    </location>
</feature>
<feature type="transmembrane region" description="Helical" evidence="1">
    <location>
        <begin position="111"/>
        <end position="131"/>
    </location>
</feature>
<feature type="transmembrane region" description="Helical" evidence="1">
    <location>
        <begin position="145"/>
        <end position="165"/>
    </location>
</feature>
<feature type="transmembrane region" description="Helical" evidence="1">
    <location>
        <begin position="215"/>
        <end position="235"/>
    </location>
</feature>
<feature type="sequence conflict" description="In Ref. 4; AA sequence." evidence="10" ref="4">
    <location>
        <position position="17"/>
    </location>
</feature>
<feature type="sequence conflict" description="In Ref. 1 and 2; AAB49821." evidence="10" ref="1 2">
    <original>Y</original>
    <variation>N</variation>
    <location>
        <position position="173"/>
    </location>
</feature>
<feature type="helix" evidence="12">
    <location>
        <begin position="11"/>
        <end position="44"/>
    </location>
</feature>
<feature type="helix" evidence="12">
    <location>
        <begin position="46"/>
        <end position="50"/>
    </location>
</feature>
<feature type="turn" evidence="12">
    <location>
        <begin position="52"/>
        <end position="54"/>
    </location>
</feature>
<feature type="helix" evidence="12">
    <location>
        <begin position="59"/>
        <end position="68"/>
    </location>
</feature>
<feature type="helix" evidence="12">
    <location>
        <begin position="70"/>
        <end position="83"/>
    </location>
</feature>
<feature type="helix" evidence="12">
    <location>
        <begin position="88"/>
        <end position="106"/>
    </location>
</feature>
<feature type="helix" evidence="12">
    <location>
        <begin position="107"/>
        <end position="111"/>
    </location>
</feature>
<feature type="helix" evidence="12">
    <location>
        <begin position="116"/>
        <end position="119"/>
    </location>
</feature>
<feature type="helix" evidence="12">
    <location>
        <begin position="125"/>
        <end position="136"/>
    </location>
</feature>
<feature type="helix" evidence="12">
    <location>
        <begin position="141"/>
        <end position="154"/>
    </location>
</feature>
<feature type="helix" evidence="12">
    <location>
        <begin position="156"/>
        <end position="164"/>
    </location>
</feature>
<feature type="helix" evidence="12">
    <location>
        <begin position="165"/>
        <end position="168"/>
    </location>
</feature>
<feature type="strand" evidence="12">
    <location>
        <begin position="170"/>
        <end position="173"/>
    </location>
</feature>
<feature type="strand" evidence="12">
    <location>
        <begin position="176"/>
        <end position="179"/>
    </location>
</feature>
<feature type="helix" evidence="12">
    <location>
        <begin position="180"/>
        <end position="187"/>
    </location>
</feature>
<feature type="strand" evidence="13">
    <location>
        <begin position="191"/>
        <end position="193"/>
    </location>
</feature>
<feature type="helix" evidence="12">
    <location>
        <begin position="195"/>
        <end position="197"/>
    </location>
</feature>
<feature type="turn" evidence="11">
    <location>
        <begin position="200"/>
        <end position="205"/>
    </location>
</feature>
<feature type="helix" evidence="13">
    <location>
        <begin position="209"/>
        <end position="211"/>
    </location>
</feature>
<feature type="helix" evidence="12">
    <location>
        <begin position="212"/>
        <end position="238"/>
    </location>
</feature>
<feature type="strand" evidence="12">
    <location>
        <begin position="243"/>
        <end position="245"/>
    </location>
</feature>
<reference key="1">
    <citation type="journal article" date="1995" name="J. Bacteriol.">
        <title>Particulate methane monooxygenase genes in methanotrophs.</title>
        <authorList>
            <person name="Semrau J.D."/>
            <person name="Chistoserdov A."/>
            <person name="Lebron J."/>
            <person name="Costello A."/>
            <person name="Davagnino J."/>
            <person name="Kenna E."/>
            <person name="Holmes A.J."/>
            <person name="Finch R."/>
            <person name="Murrell J.C."/>
            <person name="Lidstrom M.E."/>
        </authorList>
    </citation>
    <scope>NUCLEOTIDE SEQUENCE [GENOMIC DNA]</scope>
    <source>
        <strain>ATCC 33009 / NCIMB 11132 / Bath</strain>
    </source>
</reference>
<reference key="2">
    <citation type="journal article" date="1999" name="Microbiology">
        <title>Role of multiple gene copies in particulate methane monooxygenase activity in the methane-oxidizing bacterium Methylococcus capsulatus Bath.</title>
        <authorList>
            <person name="Stolyar S."/>
            <person name="Costello A.M."/>
            <person name="Peeples T.L."/>
            <person name="Lidstrom M.E."/>
        </authorList>
    </citation>
    <scope>NUCLEOTIDE SEQUENCE [GENOMIC DNA]</scope>
    <scope>FUNCTION</scope>
    <source>
        <strain>ATCC 33009 / NCIMB 11132 / Bath</strain>
    </source>
</reference>
<reference key="3">
    <citation type="journal article" date="2004" name="PLoS Biol.">
        <title>Genomic insights into methanotrophy: the complete genome sequence of Methylococcus capsulatus (Bath).</title>
        <authorList>
            <person name="Ward N.L."/>
            <person name="Larsen O."/>
            <person name="Sakwa J."/>
            <person name="Bruseth L."/>
            <person name="Khouri H.M."/>
            <person name="Durkin A.S."/>
            <person name="Dimitrov G."/>
            <person name="Jiang L."/>
            <person name="Scanlan D."/>
            <person name="Kang K.H."/>
            <person name="Lewis M.R."/>
            <person name="Nelson K.E."/>
            <person name="Methe B.A."/>
            <person name="Wu M."/>
            <person name="Heidelberg J.F."/>
            <person name="Paulsen I.T."/>
            <person name="Fouts D.E."/>
            <person name="Ravel J."/>
            <person name="Tettelin H."/>
            <person name="Ren Q."/>
            <person name="Read T.D."/>
            <person name="DeBoy R.T."/>
            <person name="Seshadri R."/>
            <person name="Salzberg S.L."/>
            <person name="Jensen H.B."/>
            <person name="Birkeland N.K."/>
            <person name="Nelson W.C."/>
            <person name="Dodson R.J."/>
            <person name="Grindhaug S.H."/>
            <person name="Holt I.E."/>
            <person name="Eidhammer I."/>
            <person name="Jonasen I."/>
            <person name="Vanaken S."/>
            <person name="Utterback T.R."/>
            <person name="Feldblyum T.V."/>
            <person name="Fraser C.M."/>
            <person name="Lillehaug J.R."/>
            <person name="Eisen J.A."/>
        </authorList>
    </citation>
    <scope>NUCLEOTIDE SEQUENCE [LARGE SCALE GENOMIC DNA]</scope>
    <source>
        <strain>ATCC 33009 / NCIMB 11132 / Bath</strain>
    </source>
</reference>
<reference key="4">
    <citation type="journal article" date="1998" name="J. Biol. Chem.">
        <title>The particulate methane monooxygenase from methylococcus capsulatus (Bath) is a novel copper-containing three-subunit enzyme. Isolation and characterization.</title>
        <authorList>
            <person name="Nguyen H.H."/>
            <person name="Elliott S.J."/>
            <person name="Yip J.H."/>
            <person name="Chan S.I."/>
        </authorList>
    </citation>
    <scope>PROTEIN SEQUENCE OF 6-33</scope>
    <scope>SUBUNIT</scope>
</reference>
<reference key="5">
    <citation type="journal article" date="1995" name="Arch. Biochem. Biophys.">
        <title>Detergent solubilization of membrane-bound methane monooxygenase requires plastoquinol analogs as electron donors.</title>
        <authorList>
            <person name="Shiemke A.K."/>
            <person name="Cook S.A."/>
            <person name="Miley T."/>
            <person name="Singleton P."/>
        </authorList>
    </citation>
    <scope>CATALYTIC ACTIVITY</scope>
    <scope>BIOPHYSICOCHEMICAL PROPERTIES</scope>
</reference>
<reference key="6">
    <citation type="journal article" date="2003" name="Biochem. J.">
        <title>The membrane-associated form of methane mono-oxygenase from Methylococcus capsulatus (Bath) is a copper/iron protein.</title>
        <authorList>
            <person name="Basu P."/>
            <person name="Katterle B."/>
            <person name="Andersson K.K."/>
            <person name="Dalton H."/>
        </authorList>
    </citation>
    <scope>SUBCELLULAR LOCATION</scope>
    <scope>SUBUNIT</scope>
</reference>
<reference key="7">
    <citation type="journal article" date="2005" name="Biochemistry">
        <title>Characterization and structural analysis of an active particulate methane monooxygenase trimer from Methylococcus capsulatus (Bath).</title>
        <authorList>
            <person name="Kitmitto A."/>
            <person name="Myronova N."/>
            <person name="Basu P."/>
            <person name="Dalton H."/>
        </authorList>
    </citation>
    <scope>ELECTRON MICROSCOPY</scope>
    <scope>SUBUNIT</scope>
</reference>
<reference key="8">
    <citation type="journal article" date="2006" name="Biochemistry">
        <title>Three-dimensional structure determination of a protein supercomplex that oxidizes methane to formaldehyde in Methylococcus capsulatus (Bath).</title>
        <authorList>
            <person name="Myronova N."/>
            <person name="Kitmitto A."/>
            <person name="Collins R.F."/>
            <person name="Miyaji A."/>
            <person name="Dalton H."/>
        </authorList>
    </citation>
    <scope>FUNCTION</scope>
    <scope>CRYOELECTRON MICROSCOPY</scope>
    <scope>SUBUNIT</scope>
</reference>
<reference key="9">
    <citation type="journal article" date="2005" name="Nature">
        <title>Crystal structure of a membrane-bound metalloenzyme that catalyses the biological oxidation of methane.</title>
        <authorList>
            <person name="Lieberman R.L."/>
            <person name="Rosenzweig A.C."/>
        </authorList>
    </citation>
    <scope>X-RAY CRYSTALLOGRAPHY (2.80 ANGSTROMS)</scope>
    <scope>SUBUNIT</scope>
    <scope>SUBCELLULAR LOCATION</scope>
</reference>
<reference key="10">
    <citation type="journal article" date="2011" name="Biochemistry">
        <title>Crystal structure and characterization of particulate methane monooxygenase from Methylocystis species strain M.</title>
        <authorList>
            <person name="Smith S.M."/>
            <person name="Rawat S."/>
            <person name="Telser J."/>
            <person name="Hoffman B.M."/>
            <person name="Stemmler T.L."/>
            <person name="Rosenzweig A.C."/>
        </authorList>
    </citation>
    <scope>X-RAY CRYSTALLOGRAPHY (2.80 ANGSTROMS)</scope>
    <scope>SUBUNIT</scope>
    <scope>SUBCELLULAR LOCATION</scope>
</reference>
<evidence type="ECO:0000255" key="1"/>
<evidence type="ECO:0000269" key="2">
    <source>
    </source>
</evidence>
<evidence type="ECO:0000269" key="3">
    <source>
    </source>
</evidence>
<evidence type="ECO:0000269" key="4">
    <source>
    </source>
</evidence>
<evidence type="ECO:0000269" key="5">
    <source>
    </source>
</evidence>
<evidence type="ECO:0000269" key="6">
    <source>
    </source>
</evidence>
<evidence type="ECO:0000269" key="7">
    <source>
    </source>
</evidence>
<evidence type="ECO:0000269" key="8">
    <source>
    </source>
</evidence>
<evidence type="ECO:0000269" key="9">
    <source>
    </source>
</evidence>
<evidence type="ECO:0000305" key="10"/>
<evidence type="ECO:0007829" key="11">
    <source>
        <dbReference type="PDB" id="1YEW"/>
    </source>
</evidence>
<evidence type="ECO:0007829" key="12">
    <source>
        <dbReference type="PDB" id="7S4H"/>
    </source>
</evidence>
<evidence type="ECO:0007829" key="13">
    <source>
        <dbReference type="PDB" id="7S4J"/>
    </source>
</evidence>
<accession>Q607G3</accession>
<accession>G1U9W5</accession>
<accession>O05112</accession>
<accession>Q49103</accession>
<proteinExistence type="evidence at protein level"/>
<sequence length="247" mass="28425">MSAAQSAVRSHAEAVQVSRTIDWMALFVVFFVIVGSYHIHAMLTMGDWDFWSDWKDRRLWVTVTPIVLVTFPAAVQSYLWERYRLPWGATVCVLGLLLGEWINRYFNFWGWTYFPINFVFPASLVPGAIILDTVLMLSGSYLFTAIVGAMGWGLIFYPGNWPIIAPLHVPVEYNGMLMSIADIQGYNYVRTGTPEYIRMVEKGTLRTFGKDVAPVSAFFSAFMSILIYFMWHFIGRWFSNERFLQST</sequence>
<gene>
    <name type="primary">pmoA1</name>
    <name type="synonym">pmoA</name>
    <name type="ordered locus">MCA1797</name>
</gene>
<gene>
    <name type="primary">pmoA2</name>
    <name type="ordered locus">MCA2854</name>
</gene>
<protein>
    <recommendedName>
        <fullName>Particulate methane monooxygenase beta subunit</fullName>
        <ecNumber>1.14.18.3</ecNumber>
    </recommendedName>
    <alternativeName>
        <fullName>Methane monooxygenase A subunit</fullName>
    </alternativeName>
    <alternativeName>
        <fullName>Particulate methane monooxygenase 27 kDa subunit</fullName>
    </alternativeName>
    <alternativeName>
        <fullName>Particulate methane monooxygenase hydroxylase 26 kDa subunit</fullName>
    </alternativeName>
    <alternativeName>
        <fullName>Particulate methane monooxygenase hydroxylase beta subunit</fullName>
        <shortName>pMMO-H beta subunit</shortName>
    </alternativeName>
</protein>
<keyword id="KW-0002">3D-structure</keyword>
<keyword id="KW-0903">Direct protein sequencing</keyword>
<keyword id="KW-0472">Membrane</keyword>
<keyword id="KW-0503">Monooxygenase</keyword>
<keyword id="KW-0560">Oxidoreductase</keyword>
<keyword id="KW-1185">Reference proteome</keyword>
<keyword id="KW-0812">Transmembrane</keyword>
<keyword id="KW-1133">Transmembrane helix</keyword>
<dbReference type="EC" id="1.14.18.3"/>
<dbReference type="EMBL" id="L40804">
    <property type="protein sequence ID" value="AAB49821.1"/>
    <property type="molecule type" value="Genomic_DNA"/>
</dbReference>
<dbReference type="EMBL" id="U94337">
    <property type="protein sequence ID" value="AAB51065.1"/>
    <property type="molecule type" value="Genomic_DNA"/>
</dbReference>
<dbReference type="EMBL" id="AE017282">
    <property type="protein sequence ID" value="AAU91114.1"/>
    <property type="molecule type" value="Genomic_DNA"/>
</dbReference>
<dbReference type="EMBL" id="AE017282">
    <property type="protein sequence ID" value="AAU92182.1"/>
    <property type="molecule type" value="Genomic_DNA"/>
</dbReference>
<dbReference type="PDB" id="1YEW">
    <property type="method" value="X-ray"/>
    <property type="resolution" value="2.80 A"/>
    <property type="chains" value="B/F/J=1-247"/>
</dbReference>
<dbReference type="PDB" id="3RGB">
    <property type="method" value="X-ray"/>
    <property type="resolution" value="2.80 A"/>
    <property type="chains" value="B/F/J=1-247"/>
</dbReference>
<dbReference type="PDB" id="7EV9">
    <property type="method" value="EM"/>
    <property type="resolution" value="2.60 A"/>
    <property type="chains" value="B/F/J=1-247"/>
</dbReference>
<dbReference type="PDB" id="7S4H">
    <property type="method" value="EM"/>
    <property type="resolution" value="2.14 A"/>
    <property type="chains" value="B/F/J=1-247"/>
</dbReference>
<dbReference type="PDB" id="7S4I">
    <property type="method" value="EM"/>
    <property type="resolution" value="2.26 A"/>
    <property type="chains" value="B/F/J=1-247"/>
</dbReference>
<dbReference type="PDB" id="7S4J">
    <property type="method" value="EM"/>
    <property type="resolution" value="2.16 A"/>
    <property type="chains" value="B/F/J=1-247"/>
</dbReference>
<dbReference type="PDB" id="7S4K">
    <property type="method" value="EM"/>
    <property type="resolution" value="2.36 A"/>
    <property type="chains" value="B/F/J=1-247"/>
</dbReference>
<dbReference type="PDB" id="7T4O">
    <property type="method" value="EM"/>
    <property type="resolution" value="3.65 A"/>
    <property type="chains" value="B/F/J=1-247"/>
</dbReference>
<dbReference type="PDB" id="7T4P">
    <property type="method" value="EM"/>
    <property type="resolution" value="3.62 A"/>
    <property type="chains" value="B/F/J=1-247"/>
</dbReference>
<dbReference type="PDB" id="7YZY">
    <property type="method" value="EM"/>
    <property type="resolution" value="4.80 A"/>
    <property type="chains" value="B/F/J=1-247"/>
</dbReference>
<dbReference type="PDB" id="8OYI">
    <property type="method" value="EM"/>
    <property type="resolution" value="2.19 A"/>
    <property type="chains" value="B/F/J=1-247"/>
</dbReference>
<dbReference type="PDB" id="8SQW">
    <property type="method" value="EM"/>
    <property type="resolution" value="2.16 A"/>
    <property type="chains" value="B/F/J=7-247"/>
</dbReference>
<dbReference type="PDB" id="8SR1">
    <property type="method" value="EM"/>
    <property type="resolution" value="2.18 A"/>
    <property type="chains" value="B/F/J=7-247"/>
</dbReference>
<dbReference type="PDB" id="8SR2">
    <property type="method" value="EM"/>
    <property type="resolution" value="2.36 A"/>
    <property type="chains" value="B/F/J=1-247"/>
</dbReference>
<dbReference type="PDB" id="8SR4">
    <property type="method" value="EM"/>
    <property type="resolution" value="3.12 A"/>
    <property type="chains" value="B/F/J=1-247"/>
</dbReference>
<dbReference type="PDB" id="8SR5">
    <property type="method" value="EM"/>
    <property type="resolution" value="3.22 A"/>
    <property type="chains" value="B/F/J=1-247"/>
</dbReference>
<dbReference type="PDB" id="9CL1">
    <property type="method" value="EM"/>
    <property type="resolution" value="2.89 A"/>
    <property type="chains" value="Ca/Cb/Cc=9-247"/>
</dbReference>
<dbReference type="PDB" id="9CL2">
    <property type="method" value="EM"/>
    <property type="resolution" value="2.42 A"/>
    <property type="chains" value="Ca/Cb/Cc=6-246"/>
</dbReference>
<dbReference type="PDB" id="9CL3">
    <property type="method" value="EM"/>
    <property type="resolution" value="2.59 A"/>
    <property type="chains" value="Ca/Cb/Cc=6-246"/>
</dbReference>
<dbReference type="PDB" id="9CL4">
    <property type="method" value="EM"/>
    <property type="resolution" value="2.61 A"/>
    <property type="chains" value="Ca/Cb/Cc=6-246"/>
</dbReference>
<dbReference type="PDBsum" id="1YEW"/>
<dbReference type="PDBsum" id="3RGB"/>
<dbReference type="PDBsum" id="7EV9"/>
<dbReference type="PDBsum" id="7S4H"/>
<dbReference type="PDBsum" id="7S4I"/>
<dbReference type="PDBsum" id="7S4J"/>
<dbReference type="PDBsum" id="7S4K"/>
<dbReference type="PDBsum" id="7T4O"/>
<dbReference type="PDBsum" id="7T4P"/>
<dbReference type="PDBsum" id="7YZY"/>
<dbReference type="PDBsum" id="8OYI"/>
<dbReference type="PDBsum" id="8SQW"/>
<dbReference type="PDBsum" id="8SR1"/>
<dbReference type="PDBsum" id="8SR2"/>
<dbReference type="PDBsum" id="8SR4"/>
<dbReference type="PDBsum" id="8SR5"/>
<dbReference type="PDBsum" id="9CL1"/>
<dbReference type="PDBsum" id="9CL2"/>
<dbReference type="PDBsum" id="9CL3"/>
<dbReference type="PDBsum" id="9CL4"/>
<dbReference type="EMDB" id="EMD-14399"/>
<dbReference type="EMDB" id="EMD-17287"/>
<dbReference type="EMDB" id="EMD-24826"/>
<dbReference type="EMDB" id="EMD-24827"/>
<dbReference type="EMDB" id="EMD-24828"/>
<dbReference type="EMDB" id="EMD-24829"/>
<dbReference type="EMDB" id="EMD-25683"/>
<dbReference type="EMDB" id="EMD-25684"/>
<dbReference type="EMDB" id="EMD-31325"/>
<dbReference type="EMDB" id="EMD-40714"/>
<dbReference type="EMDB" id="EMD-40717"/>
<dbReference type="EMDB" id="EMD-40718"/>
<dbReference type="EMDB" id="EMD-40719"/>
<dbReference type="EMDB" id="EMD-40720"/>
<dbReference type="EMDB" id="EMD-45658"/>
<dbReference type="EMDB" id="EMD-45659"/>
<dbReference type="EMDB" id="EMD-45660"/>
<dbReference type="EMDB" id="EMD-45661"/>
<dbReference type="SMR" id="Q607G3"/>
<dbReference type="STRING" id="243233.MCA1797"/>
<dbReference type="TCDB" id="9.B.280.1.2">
    <property type="family name" value="the particulate methane monooxygenase (pmmo) family"/>
</dbReference>
<dbReference type="GeneID" id="88225029"/>
<dbReference type="KEGG" id="mca:MCA1797"/>
<dbReference type="KEGG" id="mca:MCA2854"/>
<dbReference type="eggNOG" id="ENOG502Z9FM">
    <property type="taxonomic scope" value="Bacteria"/>
</dbReference>
<dbReference type="HOGENOM" id="CLU_1123603_0_0_6"/>
<dbReference type="BioCyc" id="MetaCyc:MONOMER-3881"/>
<dbReference type="BRENDA" id="1.14.18.3">
    <property type="organism ID" value="3305"/>
</dbReference>
<dbReference type="EvolutionaryTrace" id="Q607G3"/>
<dbReference type="Proteomes" id="UP000006821">
    <property type="component" value="Chromosome"/>
</dbReference>
<dbReference type="GO" id="GO:0016020">
    <property type="term" value="C:membrane"/>
    <property type="evidence" value="ECO:0007669"/>
    <property type="project" value="UniProtKB-SubCell"/>
</dbReference>
<dbReference type="GO" id="GO:0004497">
    <property type="term" value="F:monooxygenase activity"/>
    <property type="evidence" value="ECO:0007669"/>
    <property type="project" value="UniProtKB-KW"/>
</dbReference>
<dbReference type="FunFam" id="1.20.1450.10:FF:000001">
    <property type="entry name" value="Particulate methane monooxygenase beta subunit"/>
    <property type="match status" value="1"/>
</dbReference>
<dbReference type="Gene3D" id="1.20.1450.10">
    <property type="entry name" value="Ammonia/particulate methane monooxygenase, subunit A"/>
    <property type="match status" value="1"/>
</dbReference>
<dbReference type="InterPro" id="IPR037001">
    <property type="entry name" value="NH3/CH4_mOase_suA_sf"/>
</dbReference>
<dbReference type="InterPro" id="IPR003393">
    <property type="entry name" value="NH3_CH4_mOase_A"/>
</dbReference>
<dbReference type="NCBIfam" id="NF041557">
    <property type="entry name" value="AmoA_BACT"/>
    <property type="match status" value="1"/>
</dbReference>
<dbReference type="NCBIfam" id="TIGR03080">
    <property type="entry name" value="CH4_NH3mon_ox_A"/>
    <property type="match status" value="1"/>
</dbReference>
<dbReference type="Pfam" id="PF02461">
    <property type="entry name" value="AMO"/>
    <property type="match status" value="1"/>
</dbReference>
<name>PMOA_METCA</name>
<comment type="function">
    <text evidence="2 6">Non-catalytic subunit of the methane monooxygenase that is responsible for the initial oxygenation of methane to methanol in methanotrophs. At least in vitro, specific quinols can replace NADH as reductants.</text>
</comment>
<comment type="catalytic activity">
    <reaction evidence="8">
        <text>methane + a quinol + O2 = methanol + a quinone + H2O</text>
        <dbReference type="Rhea" id="RHEA:30355"/>
        <dbReference type="ChEBI" id="CHEBI:15377"/>
        <dbReference type="ChEBI" id="CHEBI:15379"/>
        <dbReference type="ChEBI" id="CHEBI:16183"/>
        <dbReference type="ChEBI" id="CHEBI:17790"/>
        <dbReference type="ChEBI" id="CHEBI:24646"/>
        <dbReference type="ChEBI" id="CHEBI:132124"/>
        <dbReference type="EC" id="1.14.18.3"/>
    </reaction>
</comment>
<comment type="biophysicochemical properties">
    <kinetics>
        <Vmax evidence="8">24.2 nmol/min/mg enzyme (with NADH as reductant)</Vmax>
        <Vmax evidence="8">4.4 nmol/min/mg enzyme (with decyl-plastoquinol as reductant)</Vmax>
        <Vmax evidence="8">2.9 nmol/min/mg enzyme (with duroquinol as reductant)</Vmax>
        <text>Kinetic parameters have been established with the pMMO heteromeric complex.</text>
    </kinetics>
</comment>
<comment type="subunit">
    <text evidence="3 4 5 6 7 9">M.capsulatus has two forms of methane monooxygenase, a soluble (sMMO) and a membrane-bound (particulate) type (pMMO). The particulate type is a nonamer composed of three alpha:beta:gamma heterotrimeric protomers assembled into a cylindrical structure; the beta and gamma subunits comprise the bulk of the membrane-spanning regions and the soluble regions are derived primarily from alpha subunits which form two antiparallel beta-barrel-like structures each. This assembly, also called pMMO hydroxylase (pMMO-H), is proposed to associate with methanol dehydrogenase (MDH), also designated as pMMO-R, to form the pMMO-C complex which seems to have greater methane monooxygenase activity.</text>
</comment>
<comment type="subcellular location">
    <subcellularLocation>
        <location evidence="3 4 7">Membrane</location>
        <topology evidence="3 4 7">Multi-pass membrane protein</topology>
    </subcellularLocation>
    <text>Located in intracellular membranes.</text>
</comment>
<comment type="miscellaneous">
    <text>Products of both gene copies, pmoA1 and pmoA2, are required for full cellular activity.</text>
</comment>
<organism>
    <name type="scientific">Methylococcus capsulatus (strain ATCC 33009 / NCIMB 11132 / Bath)</name>
    <dbReference type="NCBI Taxonomy" id="243233"/>
    <lineage>
        <taxon>Bacteria</taxon>
        <taxon>Pseudomonadati</taxon>
        <taxon>Pseudomonadota</taxon>
        <taxon>Gammaproteobacteria</taxon>
        <taxon>Methylococcales</taxon>
        <taxon>Methylococcaceae</taxon>
        <taxon>Methylococcus</taxon>
    </lineage>
</organism>